<name>RIB7_KLUMA</name>
<protein>
    <recommendedName>
        <fullName>2,5-diamino-6-ribosylamino-4(3H)-pyrimidinone 5'-phosphate reductase</fullName>
        <shortName>DAROPP reductase</shortName>
        <shortName>DARP reductase</shortName>
        <ecNumber>1.1.1.302</ecNumber>
    </recommendedName>
    <alternativeName>
        <fullName>2,5-diamino-6-(5-phospho-D-ribosylamino)pyrimidin-4(3H)-one reductase</fullName>
    </alternativeName>
    <alternativeName>
        <fullName>2,5-diamino-6-ribitylamino-4(3H)-pyrimidinone 5'-phosphate synthase</fullName>
        <shortName>DARIPP synthase</shortName>
    </alternativeName>
</protein>
<dbReference type="EC" id="1.1.1.302"/>
<dbReference type="EMBL" id="AF225206">
    <property type="protein sequence ID" value="AAF91239.1"/>
    <property type="molecule type" value="Genomic_DNA"/>
</dbReference>
<dbReference type="SMR" id="Q9P4B8"/>
<dbReference type="VEuPathDB" id="FungiDB:KLMA_40225"/>
<dbReference type="UniPathway" id="UPA00275"/>
<dbReference type="GO" id="GO:0008703">
    <property type="term" value="F:5-amino-6-(5-phosphoribosylamino)uracil reductase activity"/>
    <property type="evidence" value="ECO:0007669"/>
    <property type="project" value="InterPro"/>
</dbReference>
<dbReference type="GO" id="GO:0050661">
    <property type="term" value="F:NADP binding"/>
    <property type="evidence" value="ECO:0007669"/>
    <property type="project" value="InterPro"/>
</dbReference>
<dbReference type="GO" id="GO:0009231">
    <property type="term" value="P:riboflavin biosynthetic process"/>
    <property type="evidence" value="ECO:0007669"/>
    <property type="project" value="UniProtKB-UniPathway"/>
</dbReference>
<dbReference type="FunFam" id="3.40.430.10:FF:000011">
    <property type="entry name" value="Rib7p"/>
    <property type="match status" value="1"/>
</dbReference>
<dbReference type="Gene3D" id="3.40.430.10">
    <property type="entry name" value="Dihydrofolate Reductase, subunit A"/>
    <property type="match status" value="1"/>
</dbReference>
<dbReference type="InterPro" id="IPR024072">
    <property type="entry name" value="DHFR-like_dom_sf"/>
</dbReference>
<dbReference type="InterPro" id="IPR011549">
    <property type="entry name" value="RibD_C"/>
</dbReference>
<dbReference type="InterPro" id="IPR002734">
    <property type="entry name" value="RibDG_C"/>
</dbReference>
<dbReference type="InterPro" id="IPR050765">
    <property type="entry name" value="Riboflavin_Biosynth_HTPR"/>
</dbReference>
<dbReference type="NCBIfam" id="TIGR00227">
    <property type="entry name" value="ribD_Cterm"/>
    <property type="match status" value="1"/>
</dbReference>
<dbReference type="PANTHER" id="PTHR38011:SF7">
    <property type="entry name" value="2,5-DIAMINO-6-RIBOSYLAMINO-4(3H)-PYRIMIDINONE 5'-PHOSPHATE REDUCTASE"/>
    <property type="match status" value="1"/>
</dbReference>
<dbReference type="PANTHER" id="PTHR38011">
    <property type="entry name" value="DIHYDROFOLATE REDUCTASE FAMILY PROTEIN (AFU_ORTHOLOGUE AFUA_8G06820)"/>
    <property type="match status" value="1"/>
</dbReference>
<dbReference type="Pfam" id="PF01872">
    <property type="entry name" value="RibD_C"/>
    <property type="match status" value="1"/>
</dbReference>
<dbReference type="SUPFAM" id="SSF53597">
    <property type="entry name" value="Dihydrofolate reductase-like"/>
    <property type="match status" value="1"/>
</dbReference>
<proteinExistence type="inferred from homology"/>
<feature type="chain" id="PRO_0000135940" description="2,5-diamino-6-ribosylamino-4(3H)-pyrimidinone 5'-phosphate reductase">
    <location>
        <begin position="1"/>
        <end position="249"/>
    </location>
</feature>
<feature type="binding site" evidence="1">
    <location>
        <position position="79"/>
    </location>
    <ligand>
        <name>NADP(+)</name>
        <dbReference type="ChEBI" id="CHEBI:58349"/>
    </ligand>
</feature>
<feature type="binding site" evidence="1">
    <location>
        <position position="83"/>
    </location>
    <ligand>
        <name>NADP(+)</name>
        <dbReference type="ChEBI" id="CHEBI:58349"/>
    </ligand>
</feature>
<feature type="binding site">
    <location>
        <position position="164"/>
    </location>
    <ligand>
        <name>NADP(+)</name>
        <dbReference type="ChEBI" id="CHEBI:58349"/>
    </ligand>
</feature>
<feature type="binding site" evidence="1">
    <location>
        <begin position="187"/>
        <end position="191"/>
    </location>
    <ligand>
        <name>NADP(+)</name>
        <dbReference type="ChEBI" id="CHEBI:58349"/>
    </ligand>
</feature>
<sequence length="249" mass="28142">MVLLPLKKDLVPFLEPYLPDEERDADKEKPYVILTYAQSLDSRIAKIKGTRTFISHEETKTMTHYLRYKFDAIMLGCGTVMIDDPGLNCKWWPEDEKPEHLAGISPRPIILDPNCKWKFADSKMKKLYEAGDGKAPIIVVKELPSEPEEGVDYLVMRTNFTGKMDWSDMLVQLKSKFNVKSVMVEGGGIVINDLLQRPNLVDALIITLGATFLGSEGVEVSPLVEIKLKDVSWWTGDLDTVLCSRLVTH</sequence>
<keyword id="KW-0521">NADP</keyword>
<keyword id="KW-0560">Oxidoreductase</keyword>
<keyword id="KW-0686">Riboflavin biosynthesis</keyword>
<evidence type="ECO:0000250" key="1"/>
<evidence type="ECO:0000305" key="2"/>
<accession>Q9P4B8</accession>
<gene>
    <name type="primary">RIB7</name>
</gene>
<comment type="function">
    <text evidence="1">Catalyzes an early step in riboflavin biosynthesis, the NADPH-dependent reduction of the ribose side chain of 2,5-diamino-6-ribosylamino-4(3H)-pyrimidinone 5'-phosphate, yielding 2,5-diamino-6-ribitylamino-4(3H)-pyrimidinone 5'-phosphate.</text>
</comment>
<comment type="catalytic activity">
    <reaction>
        <text>2,5-diamino-6-(1-D-ribitylamino)pyrimidin-4(3H)-one 5'-phosphate + NADP(+) = 2,5-diamino-6-(1-D-ribosylamino)pyrimidin-4(3H)-one 5'-phosphate + NADPH + H(+)</text>
        <dbReference type="Rhea" id="RHEA:27278"/>
        <dbReference type="ChEBI" id="CHEBI:15378"/>
        <dbReference type="ChEBI" id="CHEBI:57783"/>
        <dbReference type="ChEBI" id="CHEBI:58349"/>
        <dbReference type="ChEBI" id="CHEBI:58890"/>
        <dbReference type="ChEBI" id="CHEBI:59545"/>
        <dbReference type="EC" id="1.1.1.302"/>
    </reaction>
</comment>
<comment type="catalytic activity">
    <reaction>
        <text>2,5-diamino-6-(1-D-ribitylamino)pyrimidin-4(3H)-one 5'-phosphate + NAD(+) = 2,5-diamino-6-(1-D-ribosylamino)pyrimidin-4(3H)-one 5'-phosphate + NADH + H(+)</text>
        <dbReference type="Rhea" id="RHEA:27274"/>
        <dbReference type="ChEBI" id="CHEBI:15378"/>
        <dbReference type="ChEBI" id="CHEBI:57540"/>
        <dbReference type="ChEBI" id="CHEBI:57945"/>
        <dbReference type="ChEBI" id="CHEBI:58890"/>
        <dbReference type="ChEBI" id="CHEBI:59545"/>
        <dbReference type="EC" id="1.1.1.302"/>
    </reaction>
</comment>
<comment type="pathway">
    <text>Cofactor biosynthesis; riboflavin biosynthesis.</text>
</comment>
<comment type="subunit">
    <text evidence="1">Homodimer.</text>
</comment>
<comment type="similarity">
    <text evidence="2">Belongs to the HTP reductase family.</text>
</comment>
<reference key="1">
    <citation type="journal article" date="2000" name="Gene">
        <title>Kluyveromyces marxianus exhibits an ancestral Saccharomyces cerevisiae genome organization downstream of ADH2.</title>
        <authorList>
            <person name="Ladriere J.-M."/>
            <person name="Georis I."/>
            <person name="Guerineau M."/>
            <person name="Vandenhaute J."/>
        </authorList>
    </citation>
    <scope>NUCLEOTIDE SEQUENCE [GENOMIC DNA]</scope>
    <source>
        <strain>ATCC 12424 / NRRL Y-610</strain>
    </source>
</reference>
<organism>
    <name type="scientific">Kluyveromyces marxianus</name>
    <name type="common">Yeast</name>
    <name type="synonym">Candida kefyr</name>
    <dbReference type="NCBI Taxonomy" id="4911"/>
    <lineage>
        <taxon>Eukaryota</taxon>
        <taxon>Fungi</taxon>
        <taxon>Dikarya</taxon>
        <taxon>Ascomycota</taxon>
        <taxon>Saccharomycotina</taxon>
        <taxon>Saccharomycetes</taxon>
        <taxon>Saccharomycetales</taxon>
        <taxon>Saccharomycetaceae</taxon>
        <taxon>Kluyveromyces</taxon>
    </lineage>
</organism>